<proteinExistence type="evidence at protein level"/>
<protein>
    <recommendedName>
        <fullName>Nuclear cap-binding protein subunit 2</fullName>
    </recommendedName>
    <alternativeName>
        <fullName>20 kDa nuclear cap-binding protein</fullName>
    </alternativeName>
    <alternativeName>
        <fullName>NCBP 20 kDa subunit</fullName>
        <shortName>CBP20</shortName>
    </alternativeName>
</protein>
<comment type="function">
    <text evidence="3">Component of the cap-binding complex (CBC), which binds co-transcriptionally to the 5' cap of pre-mRNAs and is involved in various processes such as pre-mRNA splicing and RNA-mediated gene silencing (RNAi). The CBC complex is involved in miRNA-mediated RNA interference via its interaction with Ars2 and is required for primary microRNAs (miRNAs) processing. Also involved in innate immunity via the short interfering RNAs (siRNAs) processing machinery by restricting the viral RNA production. In the CBC complex, Cbp20 recognizes and binds capped RNAs (m7GpppG-capped RNA) but requires Cbp80 to stabilize the movement of its N-terminal loop and lock the CBC into a high affinity cap-binding state with the cap structure.</text>
</comment>
<comment type="subunit">
    <text evidence="1 3">Component of the nuclear cap-binding complex (CBC), a heterodimer composed of Cbp80 and Cbp20 that interacts with m7GpppG-capped RNA (By similarity). Interacts with Ars2.</text>
</comment>
<comment type="subcellular location">
    <subcellularLocation>
        <location evidence="1">Nucleus</location>
    </subcellularLocation>
</comment>
<comment type="similarity">
    <text evidence="4">Belongs to the RRM NCBP2 family.</text>
</comment>
<evidence type="ECO:0000250" key="1"/>
<evidence type="ECO:0000255" key="2">
    <source>
        <dbReference type="PROSITE-ProRule" id="PRU00176"/>
    </source>
</evidence>
<evidence type="ECO:0000269" key="3">
    <source>
    </source>
</evidence>
<evidence type="ECO:0000305" key="4"/>
<feature type="chain" id="PRO_0000385266" description="Nuclear cap-binding protein subunit 2">
    <location>
        <begin position="1"/>
        <end position="154"/>
    </location>
</feature>
<feature type="domain" description="RRM" evidence="2">
    <location>
        <begin position="30"/>
        <end position="108"/>
    </location>
</feature>
<feature type="binding site" evidence="1">
    <location>
        <position position="10"/>
    </location>
    <ligand>
        <name>mRNA</name>
        <dbReference type="ChEBI" id="CHEBI:33699"/>
    </ligand>
    <ligandPart>
        <name>mRNA cap</name>
    </ligandPart>
</feature>
<feature type="binding site" evidence="1">
    <location>
        <position position="33"/>
    </location>
    <ligand>
        <name>mRNA</name>
        <dbReference type="ChEBI" id="CHEBI:33699"/>
    </ligand>
    <ligandPart>
        <name>mRNA cap</name>
    </ligandPart>
</feature>
<feature type="binding site" evidence="1">
    <location>
        <begin position="102"/>
        <end position="106"/>
    </location>
    <ligand>
        <name>mRNA</name>
        <dbReference type="ChEBI" id="CHEBI:33699"/>
    </ligand>
    <ligandPart>
        <name>mRNA cap</name>
    </ligandPart>
</feature>
<feature type="binding site" evidence="1">
    <location>
        <begin position="113"/>
        <end position="117"/>
    </location>
    <ligand>
        <name>mRNA</name>
        <dbReference type="ChEBI" id="CHEBI:33699"/>
    </ligand>
    <ligandPart>
        <name>mRNA cap</name>
    </ligandPart>
</feature>
<feature type="binding site" evidence="1">
    <location>
        <begin position="123"/>
        <end position="124"/>
    </location>
    <ligand>
        <name>mRNA</name>
        <dbReference type="ChEBI" id="CHEBI:33699"/>
    </ligand>
    <ligandPart>
        <name>mRNA cap</name>
    </ligandPart>
</feature>
<accession>Q9V3L6</accession>
<keyword id="KW-0507">mRNA processing</keyword>
<keyword id="KW-0508">mRNA splicing</keyword>
<keyword id="KW-0539">Nucleus</keyword>
<keyword id="KW-1185">Reference proteome</keyword>
<keyword id="KW-0694">RNA-binding</keyword>
<keyword id="KW-0943">RNA-mediated gene silencing</keyword>
<organism>
    <name type="scientific">Drosophila melanogaster</name>
    <name type="common">Fruit fly</name>
    <dbReference type="NCBI Taxonomy" id="7227"/>
    <lineage>
        <taxon>Eukaryota</taxon>
        <taxon>Metazoa</taxon>
        <taxon>Ecdysozoa</taxon>
        <taxon>Arthropoda</taxon>
        <taxon>Hexapoda</taxon>
        <taxon>Insecta</taxon>
        <taxon>Pterygota</taxon>
        <taxon>Neoptera</taxon>
        <taxon>Endopterygota</taxon>
        <taxon>Diptera</taxon>
        <taxon>Brachycera</taxon>
        <taxon>Muscomorpha</taxon>
        <taxon>Ephydroidea</taxon>
        <taxon>Drosophilidae</taxon>
        <taxon>Drosophila</taxon>
        <taxon>Sophophora</taxon>
    </lineage>
</organism>
<name>NCBP2_DROME</name>
<gene>
    <name type="primary">Cbp20</name>
    <name type="ORF">CG12357</name>
</gene>
<reference key="1">
    <citation type="submission" date="1999-05" db="EMBL/GenBank/DDBJ databases">
        <authorList>
            <person name="Lewis J.D."/>
        </authorList>
    </citation>
    <scope>NUCLEOTIDE SEQUENCE [MRNA]</scope>
    <source>
        <strain>Oregon-R</strain>
        <tissue>Imaginal disk</tissue>
    </source>
</reference>
<reference key="2">
    <citation type="journal article" date="2000" name="Science">
        <title>The genome sequence of Drosophila melanogaster.</title>
        <authorList>
            <person name="Adams M.D."/>
            <person name="Celniker S.E."/>
            <person name="Holt R.A."/>
            <person name="Evans C.A."/>
            <person name="Gocayne J.D."/>
            <person name="Amanatides P.G."/>
            <person name="Scherer S.E."/>
            <person name="Li P.W."/>
            <person name="Hoskins R.A."/>
            <person name="Galle R.F."/>
            <person name="George R.A."/>
            <person name="Lewis S.E."/>
            <person name="Richards S."/>
            <person name="Ashburner M."/>
            <person name="Henderson S.N."/>
            <person name="Sutton G.G."/>
            <person name="Wortman J.R."/>
            <person name="Yandell M.D."/>
            <person name="Zhang Q."/>
            <person name="Chen L.X."/>
            <person name="Brandon R.C."/>
            <person name="Rogers Y.-H.C."/>
            <person name="Blazej R.G."/>
            <person name="Champe M."/>
            <person name="Pfeiffer B.D."/>
            <person name="Wan K.H."/>
            <person name="Doyle C."/>
            <person name="Baxter E.G."/>
            <person name="Helt G."/>
            <person name="Nelson C.R."/>
            <person name="Miklos G.L.G."/>
            <person name="Abril J.F."/>
            <person name="Agbayani A."/>
            <person name="An H.-J."/>
            <person name="Andrews-Pfannkoch C."/>
            <person name="Baldwin D."/>
            <person name="Ballew R.M."/>
            <person name="Basu A."/>
            <person name="Baxendale J."/>
            <person name="Bayraktaroglu L."/>
            <person name="Beasley E.M."/>
            <person name="Beeson K.Y."/>
            <person name="Benos P.V."/>
            <person name="Berman B.P."/>
            <person name="Bhandari D."/>
            <person name="Bolshakov S."/>
            <person name="Borkova D."/>
            <person name="Botchan M.R."/>
            <person name="Bouck J."/>
            <person name="Brokstein P."/>
            <person name="Brottier P."/>
            <person name="Burtis K.C."/>
            <person name="Busam D.A."/>
            <person name="Butler H."/>
            <person name="Cadieu E."/>
            <person name="Center A."/>
            <person name="Chandra I."/>
            <person name="Cherry J.M."/>
            <person name="Cawley S."/>
            <person name="Dahlke C."/>
            <person name="Davenport L.B."/>
            <person name="Davies P."/>
            <person name="de Pablos B."/>
            <person name="Delcher A."/>
            <person name="Deng Z."/>
            <person name="Mays A.D."/>
            <person name="Dew I."/>
            <person name="Dietz S.M."/>
            <person name="Dodson K."/>
            <person name="Doup L.E."/>
            <person name="Downes M."/>
            <person name="Dugan-Rocha S."/>
            <person name="Dunkov B.C."/>
            <person name="Dunn P."/>
            <person name="Durbin K.J."/>
            <person name="Evangelista C.C."/>
            <person name="Ferraz C."/>
            <person name="Ferriera S."/>
            <person name="Fleischmann W."/>
            <person name="Fosler C."/>
            <person name="Gabrielian A.E."/>
            <person name="Garg N.S."/>
            <person name="Gelbart W.M."/>
            <person name="Glasser K."/>
            <person name="Glodek A."/>
            <person name="Gong F."/>
            <person name="Gorrell J.H."/>
            <person name="Gu Z."/>
            <person name="Guan P."/>
            <person name="Harris M."/>
            <person name="Harris N.L."/>
            <person name="Harvey D.A."/>
            <person name="Heiman T.J."/>
            <person name="Hernandez J.R."/>
            <person name="Houck J."/>
            <person name="Hostin D."/>
            <person name="Houston K.A."/>
            <person name="Howland T.J."/>
            <person name="Wei M.-H."/>
            <person name="Ibegwam C."/>
            <person name="Jalali M."/>
            <person name="Kalush F."/>
            <person name="Karpen G.H."/>
            <person name="Ke Z."/>
            <person name="Kennison J.A."/>
            <person name="Ketchum K.A."/>
            <person name="Kimmel B.E."/>
            <person name="Kodira C.D."/>
            <person name="Kraft C.L."/>
            <person name="Kravitz S."/>
            <person name="Kulp D."/>
            <person name="Lai Z."/>
            <person name="Lasko P."/>
            <person name="Lei Y."/>
            <person name="Levitsky A.A."/>
            <person name="Li J.H."/>
            <person name="Li Z."/>
            <person name="Liang Y."/>
            <person name="Lin X."/>
            <person name="Liu X."/>
            <person name="Mattei B."/>
            <person name="McIntosh T.C."/>
            <person name="McLeod M.P."/>
            <person name="McPherson D."/>
            <person name="Merkulov G."/>
            <person name="Milshina N.V."/>
            <person name="Mobarry C."/>
            <person name="Morris J."/>
            <person name="Moshrefi A."/>
            <person name="Mount S.M."/>
            <person name="Moy M."/>
            <person name="Murphy B."/>
            <person name="Murphy L."/>
            <person name="Muzny D.M."/>
            <person name="Nelson D.L."/>
            <person name="Nelson D.R."/>
            <person name="Nelson K.A."/>
            <person name="Nixon K."/>
            <person name="Nusskern D.R."/>
            <person name="Pacleb J.M."/>
            <person name="Palazzolo M."/>
            <person name="Pittman G.S."/>
            <person name="Pan S."/>
            <person name="Pollard J."/>
            <person name="Puri V."/>
            <person name="Reese M.G."/>
            <person name="Reinert K."/>
            <person name="Remington K."/>
            <person name="Saunders R.D.C."/>
            <person name="Scheeler F."/>
            <person name="Shen H."/>
            <person name="Shue B.C."/>
            <person name="Siden-Kiamos I."/>
            <person name="Simpson M."/>
            <person name="Skupski M.P."/>
            <person name="Smith T.J."/>
            <person name="Spier E."/>
            <person name="Spradling A.C."/>
            <person name="Stapleton M."/>
            <person name="Strong R."/>
            <person name="Sun E."/>
            <person name="Svirskas R."/>
            <person name="Tector C."/>
            <person name="Turner R."/>
            <person name="Venter E."/>
            <person name="Wang A.H."/>
            <person name="Wang X."/>
            <person name="Wang Z.-Y."/>
            <person name="Wassarman D.A."/>
            <person name="Weinstock G.M."/>
            <person name="Weissenbach J."/>
            <person name="Williams S.M."/>
            <person name="Woodage T."/>
            <person name="Worley K.C."/>
            <person name="Wu D."/>
            <person name="Yang S."/>
            <person name="Yao Q.A."/>
            <person name="Ye J."/>
            <person name="Yeh R.-F."/>
            <person name="Zaveri J.S."/>
            <person name="Zhan M."/>
            <person name="Zhang G."/>
            <person name="Zhao Q."/>
            <person name="Zheng L."/>
            <person name="Zheng X.H."/>
            <person name="Zhong F.N."/>
            <person name="Zhong W."/>
            <person name="Zhou X."/>
            <person name="Zhu S.C."/>
            <person name="Zhu X."/>
            <person name="Smith H.O."/>
            <person name="Gibbs R.A."/>
            <person name="Myers E.W."/>
            <person name="Rubin G.M."/>
            <person name="Venter J.C."/>
        </authorList>
    </citation>
    <scope>NUCLEOTIDE SEQUENCE [LARGE SCALE GENOMIC DNA]</scope>
    <source>
        <strain>Berkeley</strain>
    </source>
</reference>
<reference key="3">
    <citation type="journal article" date="2002" name="Genome Biol.">
        <title>Annotation of the Drosophila melanogaster euchromatic genome: a systematic review.</title>
        <authorList>
            <person name="Misra S."/>
            <person name="Crosby M.A."/>
            <person name="Mungall C.J."/>
            <person name="Matthews B.B."/>
            <person name="Campbell K.S."/>
            <person name="Hradecky P."/>
            <person name="Huang Y."/>
            <person name="Kaminker J.S."/>
            <person name="Millburn G.H."/>
            <person name="Prochnik S.E."/>
            <person name="Smith C.D."/>
            <person name="Tupy J.L."/>
            <person name="Whitfield E.J."/>
            <person name="Bayraktaroglu L."/>
            <person name="Berman B.P."/>
            <person name="Bettencourt B.R."/>
            <person name="Celniker S.E."/>
            <person name="de Grey A.D.N.J."/>
            <person name="Drysdale R.A."/>
            <person name="Harris N.L."/>
            <person name="Richter J."/>
            <person name="Russo S."/>
            <person name="Schroeder A.J."/>
            <person name="Shu S.Q."/>
            <person name="Stapleton M."/>
            <person name="Yamada C."/>
            <person name="Ashburner M."/>
            <person name="Gelbart W.M."/>
            <person name="Rubin G.M."/>
            <person name="Lewis S.E."/>
        </authorList>
    </citation>
    <scope>GENOME REANNOTATION</scope>
    <source>
        <strain>Berkeley</strain>
    </source>
</reference>
<reference key="4">
    <citation type="journal article" date="2002" name="Genome Biol.">
        <title>A Drosophila full-length cDNA resource.</title>
        <authorList>
            <person name="Stapleton M."/>
            <person name="Carlson J.W."/>
            <person name="Brokstein P."/>
            <person name="Yu C."/>
            <person name="Champe M."/>
            <person name="George R.A."/>
            <person name="Guarin H."/>
            <person name="Kronmiller B."/>
            <person name="Pacleb J.M."/>
            <person name="Park S."/>
            <person name="Wan K.H."/>
            <person name="Rubin G.M."/>
            <person name="Celniker S.E."/>
        </authorList>
    </citation>
    <scope>NUCLEOTIDE SEQUENCE [LARGE SCALE MRNA]</scope>
    <source>
        <strain>Berkeley</strain>
        <tissue>Embryo</tissue>
    </source>
</reference>
<reference key="5">
    <citation type="journal article" date="2009" name="Cell">
        <title>Ars2 regulates both miRNA- and siRNA- dependent silencing and suppresses RNA virus infection in Drosophila.</title>
        <authorList>
            <person name="Sabin L.R."/>
            <person name="Zhou R."/>
            <person name="Gruber J.J."/>
            <person name="Lukinova N."/>
            <person name="Bambina S."/>
            <person name="Berman A."/>
            <person name="Lau C.-K."/>
            <person name="Thompson C.B."/>
            <person name="Cherry S."/>
        </authorList>
    </citation>
    <scope>FUNCTION</scope>
    <scope>INTERACTION WITH ARS2</scope>
</reference>
<dbReference type="EMBL" id="AJ238969">
    <property type="protein sequence ID" value="CAB53185.1"/>
    <property type="molecule type" value="mRNA"/>
</dbReference>
<dbReference type="EMBL" id="AE014297">
    <property type="protein sequence ID" value="AAF55496.1"/>
    <property type="molecule type" value="Genomic_DNA"/>
</dbReference>
<dbReference type="EMBL" id="AY070578">
    <property type="protein sequence ID" value="AAL48049.1"/>
    <property type="molecule type" value="mRNA"/>
</dbReference>
<dbReference type="RefSeq" id="NP_524396.1">
    <property type="nucleotide sequence ID" value="NM_079672.3"/>
</dbReference>
<dbReference type="SMR" id="Q9V3L6"/>
<dbReference type="BioGRID" id="67190">
    <property type="interactions" value="6"/>
</dbReference>
<dbReference type="FunCoup" id="Q9V3L6">
    <property type="interactions" value="2225"/>
</dbReference>
<dbReference type="IntAct" id="Q9V3L6">
    <property type="interactions" value="3"/>
</dbReference>
<dbReference type="STRING" id="7227.FBpp0082973"/>
<dbReference type="PaxDb" id="7227-FBpp0082973"/>
<dbReference type="ABCD" id="Q9V3L6">
    <property type="antibodies" value="1 sequenced antibody"/>
</dbReference>
<dbReference type="DNASU" id="42166"/>
<dbReference type="EnsemblMetazoa" id="FBtr0083551">
    <property type="protein sequence ID" value="FBpp0082973"/>
    <property type="gene ID" value="FBgn0022943"/>
</dbReference>
<dbReference type="GeneID" id="42166"/>
<dbReference type="KEGG" id="dme:Dmel_CG12357"/>
<dbReference type="UCSC" id="CG12357-RA">
    <property type="organism name" value="d. melanogaster"/>
</dbReference>
<dbReference type="AGR" id="FB:FBgn0022943"/>
<dbReference type="CTD" id="42166"/>
<dbReference type="FlyBase" id="FBgn0022943">
    <property type="gene designation" value="Cbp20"/>
</dbReference>
<dbReference type="VEuPathDB" id="VectorBase:FBgn0022943"/>
<dbReference type="eggNOG" id="KOG0121">
    <property type="taxonomic scope" value="Eukaryota"/>
</dbReference>
<dbReference type="GeneTree" id="ENSGT00390000003197"/>
<dbReference type="HOGENOM" id="CLU_070952_2_0_1"/>
<dbReference type="InParanoid" id="Q9V3L6"/>
<dbReference type="OMA" id="DIRRIIM"/>
<dbReference type="OrthoDB" id="201398at2759"/>
<dbReference type="PhylomeDB" id="Q9V3L6"/>
<dbReference type="Reactome" id="R-DME-111367">
    <property type="pathway name" value="SLBP independent Processing of Histone Pre-mRNAs"/>
</dbReference>
<dbReference type="Reactome" id="R-DME-113418">
    <property type="pathway name" value="Formation of the Early Elongation Complex"/>
</dbReference>
<dbReference type="Reactome" id="R-DME-159227">
    <property type="pathway name" value="Transport of the SLBP independent Mature mRNA"/>
</dbReference>
<dbReference type="Reactome" id="R-DME-159230">
    <property type="pathway name" value="Transport of the SLBP Dependant Mature mRNA"/>
</dbReference>
<dbReference type="Reactome" id="R-DME-159231">
    <property type="pathway name" value="Transport of Mature mRNA Derived from an Intronless Transcript"/>
</dbReference>
<dbReference type="Reactome" id="R-DME-159236">
    <property type="pathway name" value="Transport of Mature mRNA derived from an Intron-Containing Transcript"/>
</dbReference>
<dbReference type="Reactome" id="R-DME-674695">
    <property type="pathway name" value="RNA Polymerase II Pre-transcription Events"/>
</dbReference>
<dbReference type="Reactome" id="R-DME-6807505">
    <property type="pathway name" value="RNA polymerase II transcribes snRNA genes"/>
</dbReference>
<dbReference type="Reactome" id="R-DME-72086">
    <property type="pathway name" value="mRNA Capping"/>
</dbReference>
<dbReference type="Reactome" id="R-DME-72163">
    <property type="pathway name" value="mRNA Splicing - Major Pathway"/>
</dbReference>
<dbReference type="Reactome" id="R-DME-72165">
    <property type="pathway name" value="mRNA Splicing - Minor Pathway"/>
</dbReference>
<dbReference type="Reactome" id="R-DME-72187">
    <property type="pathway name" value="mRNA 3'-end processing"/>
</dbReference>
<dbReference type="Reactome" id="R-DME-72203">
    <property type="pathway name" value="Processing of Capped Intron-Containing Pre-mRNA"/>
</dbReference>
<dbReference type="Reactome" id="R-DME-73856">
    <property type="pathway name" value="RNA Polymerase II Transcription Termination"/>
</dbReference>
<dbReference type="Reactome" id="R-DME-77588">
    <property type="pathway name" value="SLBP Dependent Processing of Replication-Dependent Histone Pre-mRNAs"/>
</dbReference>
<dbReference type="Reactome" id="R-DME-77595">
    <property type="pathway name" value="Processing of Intronless Pre-mRNAs"/>
</dbReference>
<dbReference type="Reactome" id="R-DME-975956">
    <property type="pathway name" value="Nonsense Mediated Decay (NMD) independent of the Exon Junction Complex (EJC)"/>
</dbReference>
<dbReference type="Reactome" id="R-DME-975957">
    <property type="pathway name" value="Nonsense Mediated Decay (NMD) enhanced by the Exon Junction Complex (EJC)"/>
</dbReference>
<dbReference type="BioGRID-ORCS" id="42166">
    <property type="hits" value="1 hit in 3 CRISPR screens"/>
</dbReference>
<dbReference type="GenomeRNAi" id="42166"/>
<dbReference type="PRO" id="PR:Q9V3L6"/>
<dbReference type="Proteomes" id="UP000000803">
    <property type="component" value="Chromosome 3R"/>
</dbReference>
<dbReference type="Bgee" id="FBgn0022943">
    <property type="expression patterns" value="Expressed in spermatocyte in testis and 135 other cell types or tissues"/>
</dbReference>
<dbReference type="ExpressionAtlas" id="Q9V3L6">
    <property type="expression patterns" value="baseline and differential"/>
</dbReference>
<dbReference type="GO" id="GO:0071013">
    <property type="term" value="C:catalytic step 2 spliceosome"/>
    <property type="evidence" value="ECO:0007005"/>
    <property type="project" value="FlyBase"/>
</dbReference>
<dbReference type="GO" id="GO:0005829">
    <property type="term" value="C:cytosol"/>
    <property type="evidence" value="ECO:0000314"/>
    <property type="project" value="FlyBase"/>
</dbReference>
<dbReference type="GO" id="GO:0005846">
    <property type="term" value="C:nuclear cap binding complex"/>
    <property type="evidence" value="ECO:0000318"/>
    <property type="project" value="GO_Central"/>
</dbReference>
<dbReference type="GO" id="GO:0005634">
    <property type="term" value="C:nucleus"/>
    <property type="evidence" value="ECO:0000314"/>
    <property type="project" value="FlyBase"/>
</dbReference>
<dbReference type="GO" id="GO:0071011">
    <property type="term" value="C:precatalytic spliceosome"/>
    <property type="evidence" value="ECO:0007005"/>
    <property type="project" value="FlyBase"/>
</dbReference>
<dbReference type="GO" id="GO:0099523">
    <property type="term" value="C:presynaptic cytosol"/>
    <property type="evidence" value="ECO:0000314"/>
    <property type="project" value="FlyBase"/>
</dbReference>
<dbReference type="GO" id="GO:0005681">
    <property type="term" value="C:spliceosomal complex"/>
    <property type="evidence" value="ECO:0000250"/>
    <property type="project" value="FlyBase"/>
</dbReference>
<dbReference type="GO" id="GO:0003729">
    <property type="term" value="F:mRNA binding"/>
    <property type="evidence" value="ECO:0000250"/>
    <property type="project" value="FlyBase"/>
</dbReference>
<dbReference type="GO" id="GO:0000339">
    <property type="term" value="F:RNA cap binding"/>
    <property type="evidence" value="ECO:0000318"/>
    <property type="project" value="GO_Central"/>
</dbReference>
<dbReference type="GO" id="GO:0045292">
    <property type="term" value="P:mRNA cis splicing, via spliceosome"/>
    <property type="evidence" value="ECO:0007669"/>
    <property type="project" value="InterPro"/>
</dbReference>
<dbReference type="GO" id="GO:0000398">
    <property type="term" value="P:mRNA splicing, via spliceosome"/>
    <property type="evidence" value="ECO:0000250"/>
    <property type="project" value="FlyBase"/>
</dbReference>
<dbReference type="GO" id="GO:0045071">
    <property type="term" value="P:negative regulation of viral genome replication"/>
    <property type="evidence" value="ECO:0000315"/>
    <property type="project" value="FlyBase"/>
</dbReference>
<dbReference type="GO" id="GO:0031053">
    <property type="term" value="P:primary miRNA processing"/>
    <property type="evidence" value="ECO:0000315"/>
    <property type="project" value="UniProtKB"/>
</dbReference>
<dbReference type="GO" id="GO:0035194">
    <property type="term" value="P:regulatory ncRNA-mediated post-transcriptional gene silencing"/>
    <property type="evidence" value="ECO:0000315"/>
    <property type="project" value="UniProtKB"/>
</dbReference>
<dbReference type="GO" id="GO:0030422">
    <property type="term" value="P:siRNA processing"/>
    <property type="evidence" value="ECO:0000315"/>
    <property type="project" value="FlyBase"/>
</dbReference>
<dbReference type="CDD" id="cd12240">
    <property type="entry name" value="RRM_NCBP2"/>
    <property type="match status" value="1"/>
</dbReference>
<dbReference type="FunFam" id="3.30.70.330:FF:000128">
    <property type="entry name" value="Nuclear cap-binding protein subunit 2"/>
    <property type="match status" value="1"/>
</dbReference>
<dbReference type="Gene3D" id="3.30.70.330">
    <property type="match status" value="1"/>
</dbReference>
<dbReference type="InterPro" id="IPR027157">
    <property type="entry name" value="NCBP2"/>
</dbReference>
<dbReference type="InterPro" id="IPR034148">
    <property type="entry name" value="NCBP2_RRM"/>
</dbReference>
<dbReference type="InterPro" id="IPR012677">
    <property type="entry name" value="Nucleotide-bd_a/b_plait_sf"/>
</dbReference>
<dbReference type="InterPro" id="IPR035979">
    <property type="entry name" value="RBD_domain_sf"/>
</dbReference>
<dbReference type="InterPro" id="IPR000504">
    <property type="entry name" value="RRM_dom"/>
</dbReference>
<dbReference type="PANTHER" id="PTHR18847">
    <property type="entry name" value="20 KD NUCLEAR CAP BINDING PROTEIN"/>
    <property type="match status" value="1"/>
</dbReference>
<dbReference type="PANTHER" id="PTHR18847:SF0">
    <property type="entry name" value="NUCLEAR CAP-BINDING PROTEIN SUBUNIT 2"/>
    <property type="match status" value="1"/>
</dbReference>
<dbReference type="Pfam" id="PF00076">
    <property type="entry name" value="RRM_1"/>
    <property type="match status" value="1"/>
</dbReference>
<dbReference type="SMART" id="SM00360">
    <property type="entry name" value="RRM"/>
    <property type="match status" value="1"/>
</dbReference>
<dbReference type="SUPFAM" id="SSF54928">
    <property type="entry name" value="RNA-binding domain, RBD"/>
    <property type="match status" value="1"/>
</dbReference>
<dbReference type="PROSITE" id="PS50102">
    <property type="entry name" value="RRM"/>
    <property type="match status" value="1"/>
</dbReference>
<sequence>MFASVELSSYRDQHFKGSRSEQERSLRDSCTLYVGNLSFYTTEEQIHELFSRCGDVRVIVMGLDKYKKTPCGFCFVEYYVRSEAEAAMRFVNGTRLDDRLIRVDWDAGFVEGRQYGRGKTGGQVRDEYRTDYDAGRGGYGKLLSQKIAPNTDNR</sequence>